<comment type="function">
    <text evidence="1">Catalyzes the covalent attachment of the prokaryotic ubiquitin-like protein modifier Pup to the proteasomal substrate proteins, thereby targeting them for proteasomal degradation. This tagging system is termed pupylation. The ligation reaction involves the side-chain carboxylate of the C-terminal glutamate of Pup and the side-chain amino group of a substrate lysine.</text>
</comment>
<comment type="catalytic activity">
    <reaction evidence="1">
        <text>ATP + [prokaryotic ubiquitin-like protein]-L-glutamate + [protein]-L-lysine = ADP + phosphate + N(6)-([prokaryotic ubiquitin-like protein]-gamma-L-glutamyl)-[protein]-L-lysine.</text>
        <dbReference type="EC" id="6.3.1.19"/>
    </reaction>
</comment>
<comment type="pathway">
    <text evidence="1">Protein degradation; proteasomal Pup-dependent pathway.</text>
</comment>
<comment type="pathway">
    <text evidence="1">Protein modification; protein pupylation.</text>
</comment>
<comment type="miscellaneous">
    <text evidence="1">The reaction mechanism probably proceeds via the activation of Pup by phosphorylation of its C-terminal glutamate, which is then subject to nucleophilic attack by the substrate lysine, resulting in an isopeptide bond and the release of phosphate as a good leaving group.</text>
</comment>
<comment type="similarity">
    <text evidence="1">Belongs to the Pup ligase/Pup deamidase family. Pup-conjugating enzyme subfamily.</text>
</comment>
<comment type="sequence caution" evidence="2">
    <conflict type="frameshift">
        <sequence resource="EMBL-CDS" id="AAA17198"/>
    </conflict>
</comment>
<sequence length="452" mass="51458">MQRRIMGIETEFGVTCTFHGHRRLSPDEVARYLFRRVVSWGRSSNVFLRNGARLYLDVGSHPEYATAECDNLVQLVTHDRAGEWVLEDLLVDAEQRLADEGIGGDIYLFKNNTDSAGNSYGCHENYLIVRAGEFSRISDVLLPFLVTRQLICGAGKVLQTPKAATFCLSQRAEHIWEGVSSATTRSRPIINTRDEPHADAEKYRRLHVIVGDSNMCETTTMLKVGTAALMLEMVETGVPFRDFSLDNPIRAIREVSHDITGRRPVRLAGGRQASALDIQREYYTRAFEHLQTREPNVQFEQVVDLWGRQLDAIESQDFAKVDTEIDWVIKRKLFQRYQDRDNMELTDPKIAQLDLAYHDIKRGRGVFDLLQRKGLAARVTTDEDIADAVNHPPQTTRARLRGEFISAAQAAGRDFTVDWVHLKLNDQAQRTVLCKDPFRAVDERVKRLIASM</sequence>
<feature type="chain" id="PRO_0000103968" description="Pup--protein ligase">
    <location>
        <begin position="1"/>
        <end position="452"/>
    </location>
</feature>
<feature type="active site" description="Proton acceptor" evidence="1">
    <location>
        <position position="57"/>
    </location>
</feature>
<feature type="binding site" evidence="1">
    <location>
        <position position="9"/>
    </location>
    <ligand>
        <name>Mg(2+)</name>
        <dbReference type="ChEBI" id="CHEBI:18420"/>
    </ligand>
</feature>
<feature type="binding site" evidence="1">
    <location>
        <position position="53"/>
    </location>
    <ligand>
        <name>ATP</name>
        <dbReference type="ChEBI" id="CHEBI:30616"/>
    </ligand>
</feature>
<feature type="binding site" evidence="1">
    <location>
        <position position="55"/>
    </location>
    <ligand>
        <name>Mg(2+)</name>
        <dbReference type="ChEBI" id="CHEBI:18420"/>
    </ligand>
</feature>
<feature type="binding site" evidence="1">
    <location>
        <position position="63"/>
    </location>
    <ligand>
        <name>Mg(2+)</name>
        <dbReference type="ChEBI" id="CHEBI:18420"/>
    </ligand>
</feature>
<feature type="binding site" evidence="1">
    <location>
        <position position="66"/>
    </location>
    <ligand>
        <name>ATP</name>
        <dbReference type="ChEBI" id="CHEBI:30616"/>
    </ligand>
</feature>
<feature type="binding site" evidence="1">
    <location>
        <position position="419"/>
    </location>
    <ligand>
        <name>ATP</name>
        <dbReference type="ChEBI" id="CHEBI:30616"/>
    </ligand>
</feature>
<keyword id="KW-0067">ATP-binding</keyword>
<keyword id="KW-0436">Ligase</keyword>
<keyword id="KW-0460">Magnesium</keyword>
<keyword id="KW-0479">Metal-binding</keyword>
<keyword id="KW-0547">Nucleotide-binding</keyword>
<keyword id="KW-1185">Reference proteome</keyword>
<keyword id="KW-0833">Ubl conjugation pathway</keyword>
<protein>
    <recommendedName>
        <fullName evidence="1">Pup--protein ligase</fullName>
        <ecNumber evidence="1">6.3.1.19</ecNumber>
    </recommendedName>
    <alternativeName>
        <fullName evidence="1">Proteasome accessory factor A</fullName>
    </alternativeName>
    <alternativeName>
        <fullName evidence="1">Pup-conjugating enzyme</fullName>
    </alternativeName>
</protein>
<organism>
    <name type="scientific">Mycobacterium leprae (strain TN)</name>
    <dbReference type="NCBI Taxonomy" id="272631"/>
    <lineage>
        <taxon>Bacteria</taxon>
        <taxon>Bacillati</taxon>
        <taxon>Actinomycetota</taxon>
        <taxon>Actinomycetes</taxon>
        <taxon>Mycobacteriales</taxon>
        <taxon>Mycobacteriaceae</taxon>
        <taxon>Mycobacterium</taxon>
    </lineage>
</organism>
<dbReference type="EC" id="6.3.1.19" evidence="1"/>
<dbReference type="EMBL" id="U00017">
    <property type="protein sequence ID" value="AAA17198.1"/>
    <property type="status" value="ALT_FRAME"/>
    <property type="molecule type" value="Genomic_DNA"/>
</dbReference>
<dbReference type="EMBL" id="AL035310">
    <property type="protein sequence ID" value="CAA22938.1"/>
    <property type="molecule type" value="Genomic_DNA"/>
</dbReference>
<dbReference type="EMBL" id="AL583921">
    <property type="protein sequence ID" value="CAC31709.1"/>
    <property type="molecule type" value="Genomic_DNA"/>
</dbReference>
<dbReference type="PIR" id="B87075">
    <property type="entry name" value="B87075"/>
</dbReference>
<dbReference type="PIR" id="S72858">
    <property type="entry name" value="S72858"/>
</dbReference>
<dbReference type="RefSeq" id="NP_301952.1">
    <property type="nucleotide sequence ID" value="NC_002677.1"/>
</dbReference>
<dbReference type="RefSeq" id="WP_010908273.1">
    <property type="nucleotide sequence ID" value="NC_002677.1"/>
</dbReference>
<dbReference type="SMR" id="P54077"/>
<dbReference type="STRING" id="272631.gene:17575162"/>
<dbReference type="KEGG" id="mle:ML1328"/>
<dbReference type="PATRIC" id="fig|272631.5.peg.2448"/>
<dbReference type="Leproma" id="ML1328"/>
<dbReference type="eggNOG" id="COG0638">
    <property type="taxonomic scope" value="Bacteria"/>
</dbReference>
<dbReference type="HOGENOM" id="CLU_040524_0_1_11"/>
<dbReference type="OrthoDB" id="9760627at2"/>
<dbReference type="UniPathway" id="UPA00997"/>
<dbReference type="UniPathway" id="UPA00998"/>
<dbReference type="Proteomes" id="UP000000806">
    <property type="component" value="Chromosome"/>
</dbReference>
<dbReference type="GO" id="GO:0005524">
    <property type="term" value="F:ATP binding"/>
    <property type="evidence" value="ECO:0007669"/>
    <property type="project" value="UniProtKB-UniRule"/>
</dbReference>
<dbReference type="GO" id="GO:0016879">
    <property type="term" value="F:ligase activity, forming carbon-nitrogen bonds"/>
    <property type="evidence" value="ECO:0007669"/>
    <property type="project" value="InterPro"/>
</dbReference>
<dbReference type="GO" id="GO:0000287">
    <property type="term" value="F:magnesium ion binding"/>
    <property type="evidence" value="ECO:0007669"/>
    <property type="project" value="UniProtKB-UniRule"/>
</dbReference>
<dbReference type="GO" id="GO:0019787">
    <property type="term" value="F:ubiquitin-like protein transferase activity"/>
    <property type="evidence" value="ECO:0007669"/>
    <property type="project" value="UniProtKB-UniRule"/>
</dbReference>
<dbReference type="GO" id="GO:0019941">
    <property type="term" value="P:modification-dependent protein catabolic process"/>
    <property type="evidence" value="ECO:0007669"/>
    <property type="project" value="UniProtKB-UniRule"/>
</dbReference>
<dbReference type="GO" id="GO:0010498">
    <property type="term" value="P:proteasomal protein catabolic process"/>
    <property type="evidence" value="ECO:0007669"/>
    <property type="project" value="UniProtKB-UniRule"/>
</dbReference>
<dbReference type="GO" id="GO:0070490">
    <property type="term" value="P:protein pupylation"/>
    <property type="evidence" value="ECO:0007669"/>
    <property type="project" value="UniProtKB-UniRule"/>
</dbReference>
<dbReference type="HAMAP" id="MF_02111">
    <property type="entry name" value="Pup_ligase"/>
    <property type="match status" value="1"/>
</dbReference>
<dbReference type="InterPro" id="IPR022279">
    <property type="entry name" value="Pup_ligase"/>
</dbReference>
<dbReference type="InterPro" id="IPR004347">
    <property type="entry name" value="Pup_ligase/deamidase"/>
</dbReference>
<dbReference type="NCBIfam" id="TIGR03686">
    <property type="entry name" value="pupylate_PafA"/>
    <property type="match status" value="1"/>
</dbReference>
<dbReference type="PANTHER" id="PTHR42307">
    <property type="entry name" value="PUP DEAMIDASE/DEPUPYLASE"/>
    <property type="match status" value="1"/>
</dbReference>
<dbReference type="PANTHER" id="PTHR42307:SF3">
    <property type="entry name" value="PUP--PROTEIN LIGASE"/>
    <property type="match status" value="1"/>
</dbReference>
<dbReference type="Pfam" id="PF03136">
    <property type="entry name" value="Pup_ligase"/>
    <property type="match status" value="1"/>
</dbReference>
<dbReference type="PIRSF" id="PIRSF018077">
    <property type="entry name" value="UCP018077"/>
    <property type="match status" value="1"/>
</dbReference>
<name>PAFA_MYCLE</name>
<reference key="1">
    <citation type="submission" date="1994-03" db="EMBL/GenBank/DDBJ databases">
        <authorList>
            <person name="Smith D.R."/>
            <person name="Robison K."/>
        </authorList>
    </citation>
    <scope>NUCLEOTIDE SEQUENCE [GENOMIC DNA]</scope>
</reference>
<reference key="2">
    <citation type="journal article" date="2001" name="Nature">
        <title>Massive gene decay in the leprosy bacillus.</title>
        <authorList>
            <person name="Cole S.T."/>
            <person name="Eiglmeier K."/>
            <person name="Parkhill J."/>
            <person name="James K.D."/>
            <person name="Thomson N.R."/>
            <person name="Wheeler P.R."/>
            <person name="Honore N."/>
            <person name="Garnier T."/>
            <person name="Churcher C.M."/>
            <person name="Harris D.E."/>
            <person name="Mungall K.L."/>
            <person name="Basham D."/>
            <person name="Brown D."/>
            <person name="Chillingworth T."/>
            <person name="Connor R."/>
            <person name="Davies R.M."/>
            <person name="Devlin K."/>
            <person name="Duthoy S."/>
            <person name="Feltwell T."/>
            <person name="Fraser A."/>
            <person name="Hamlin N."/>
            <person name="Holroyd S."/>
            <person name="Hornsby T."/>
            <person name="Jagels K."/>
            <person name="Lacroix C."/>
            <person name="Maclean J."/>
            <person name="Moule S."/>
            <person name="Murphy L.D."/>
            <person name="Oliver K."/>
            <person name="Quail M.A."/>
            <person name="Rajandream M.A."/>
            <person name="Rutherford K.M."/>
            <person name="Rutter S."/>
            <person name="Seeger K."/>
            <person name="Simon S."/>
            <person name="Simmonds M."/>
            <person name="Skelton J."/>
            <person name="Squares R."/>
            <person name="Squares S."/>
            <person name="Stevens K."/>
            <person name="Taylor K."/>
            <person name="Whitehead S."/>
            <person name="Woodward J.R."/>
            <person name="Barrell B.G."/>
        </authorList>
    </citation>
    <scope>NUCLEOTIDE SEQUENCE [LARGE SCALE GENOMIC DNA]</scope>
    <source>
        <strain>TN</strain>
    </source>
</reference>
<accession>P54077</accession>
<accession>Q9S374</accession>
<gene>
    <name evidence="1" type="primary">pafA</name>
    <name type="ordered locus">ML1328</name>
    <name type="ORF">B2126_C2_219</name>
    <name type="ORF">MLCB2533.24</name>
</gene>
<proteinExistence type="inferred from homology"/>
<evidence type="ECO:0000255" key="1">
    <source>
        <dbReference type="HAMAP-Rule" id="MF_02111"/>
    </source>
</evidence>
<evidence type="ECO:0000305" key="2"/>